<evidence type="ECO:0000250" key="1">
    <source>
        <dbReference type="UniProtKB" id="Q9VFK3"/>
    </source>
</evidence>
<evidence type="ECO:0000255" key="2"/>
<evidence type="ECO:0000256" key="3">
    <source>
        <dbReference type="SAM" id="MobiDB-lite"/>
    </source>
</evidence>
<evidence type="ECO:0000305" key="4"/>
<evidence type="ECO:0000312" key="5">
    <source>
        <dbReference type="EMBL" id="EDW42192.1"/>
    </source>
</evidence>
<sequence length="148" mass="16751">MDVLHAHDLYDEQLIDRVGDAVNEDAGDDLDTLVDGQQQQQRVGFNRQMDILLDAPQEPPLGVFPAQGGPNGPPRLRKKRSFYTMTKPTPPCQSQEPEMCLLMASVTRAMRHVREDQRGEYFANYLVENMTSQNYPNGVGLPQHWGQL</sequence>
<accession>B4HEN5</accession>
<gene>
    <name evidence="1" type="primary">soti</name>
    <name type="ORF">GM25856</name>
</gene>
<keyword id="KW-0217">Developmental protein</keyword>
<keyword id="KW-0221">Differentiation</keyword>
<keyword id="KW-0325">Glycoprotein</keyword>
<keyword id="KW-1185">Reference proteome</keyword>
<keyword id="KW-0744">Spermatogenesis</keyword>
<protein>
    <recommendedName>
        <fullName evidence="1">Male-specific protein scotti</fullName>
    </recommendedName>
</protein>
<dbReference type="EMBL" id="CH480815">
    <property type="protein sequence ID" value="EDW42192.1"/>
    <property type="molecule type" value="Genomic_DNA"/>
</dbReference>
<dbReference type="STRING" id="7238.B4HEN5"/>
<dbReference type="GlyCosmos" id="B4HEN5">
    <property type="glycosylation" value="1 site, No reported glycans"/>
</dbReference>
<dbReference type="EnsemblMetazoa" id="FBtr0208841">
    <property type="protein sequence ID" value="FBpp0207333"/>
    <property type="gene ID" value="FBgn0180712"/>
</dbReference>
<dbReference type="EnsemblMetazoa" id="XM_002031170.2">
    <property type="protein sequence ID" value="XP_002031206.1"/>
    <property type="gene ID" value="LOC6606401"/>
</dbReference>
<dbReference type="GeneID" id="6606401"/>
<dbReference type="KEGG" id="dse:6606401"/>
<dbReference type="HOGENOM" id="CLU_120156_0_0_1"/>
<dbReference type="OMA" id="LPQRWGQ"/>
<dbReference type="OrthoDB" id="66620at7215"/>
<dbReference type="PhylomeDB" id="B4HEN5"/>
<dbReference type="Proteomes" id="UP000001292">
    <property type="component" value="Unassembled WGS sequence"/>
</dbReference>
<dbReference type="GO" id="GO:0007291">
    <property type="term" value="P:sperm individualization"/>
    <property type="evidence" value="ECO:0000250"/>
    <property type="project" value="UniProtKB"/>
</dbReference>
<dbReference type="InterPro" id="IPR031397">
    <property type="entry name" value="Soti"/>
</dbReference>
<dbReference type="Pfam" id="PF17079">
    <property type="entry name" value="SOTI"/>
    <property type="match status" value="1"/>
</dbReference>
<name>SOTI_DROSE</name>
<organism>
    <name type="scientific">Drosophila sechellia</name>
    <name type="common">Fruit fly</name>
    <dbReference type="NCBI Taxonomy" id="7238"/>
    <lineage>
        <taxon>Eukaryota</taxon>
        <taxon>Metazoa</taxon>
        <taxon>Ecdysozoa</taxon>
        <taxon>Arthropoda</taxon>
        <taxon>Hexapoda</taxon>
        <taxon>Insecta</taxon>
        <taxon>Pterygota</taxon>
        <taxon>Neoptera</taxon>
        <taxon>Endopterygota</taxon>
        <taxon>Diptera</taxon>
        <taxon>Brachycera</taxon>
        <taxon>Muscomorpha</taxon>
        <taxon>Ephydroidea</taxon>
        <taxon>Drosophilidae</taxon>
        <taxon>Drosophila</taxon>
        <taxon>Sophophora</taxon>
    </lineage>
</organism>
<proteinExistence type="inferred from homology"/>
<feature type="chain" id="PRO_0000379447" description="Male-specific protein scotti">
    <location>
        <begin position="1"/>
        <end position="148"/>
    </location>
</feature>
<feature type="region of interest" description="Disordered" evidence="3">
    <location>
        <begin position="56"/>
        <end position="78"/>
    </location>
</feature>
<feature type="glycosylation site" description="N-linked (GlcNAc...) asparagine" evidence="2">
    <location>
        <position position="129"/>
    </location>
</feature>
<comment type="function">
    <text evidence="1">Post-meiotically transcribed gene that has a role in late spermiogenesis; required for actin cone progression during spermatid individualization.</text>
</comment>
<comment type="similarity">
    <text evidence="4">Belongs to the male-specific scotti family.</text>
</comment>
<reference evidence="5" key="1">
    <citation type="journal article" date="2007" name="Nature">
        <title>Evolution of genes and genomes on the Drosophila phylogeny.</title>
        <authorList>
            <consortium name="Drosophila 12 genomes consortium"/>
        </authorList>
    </citation>
    <scope>NUCLEOTIDE SEQUENCE [LARGE SCALE GENOMIC DNA]</scope>
    <source>
        <strain evidence="5">Rob3c / Tucson 14021-0248.25</strain>
    </source>
</reference>